<sequence>MIALGIEGTAWSLSIGVVDEEGVIALENDPYIPKEGGIHPREASQHHSERLPSLLSRVFEKVDKNSIDVVAFSQGPGMGPCLRVVATAARLLAIKLEKPLVGVNHCLAHVEVGRWQTGARKPVSLYVSGGNSQVIARRGNRYRVFGETLDIGIGNALDKLARHMGLKHPGGPKIEELAKKGQKYHFLPYVVKGMDFSFSGMVTAAQRLFDSGVRMEDVAFSFQETAFAMLTEVTERALAYLDLNEVLLVGGVAANKRLQEMLRIMCEDRGAKFYVPPKELAGDNGAMIAYTGLLMYKHGHQTPVEKSYVRPDFRIEDVEVNWD</sequence>
<protein>
    <recommendedName>
        <fullName evidence="1">tRNA N6-adenosine threonylcarbamoyltransferase</fullName>
        <ecNumber evidence="1">2.3.1.234</ecNumber>
    </recommendedName>
    <alternativeName>
        <fullName evidence="1">N6-L-threonylcarbamoyladenine synthase</fullName>
        <shortName evidence="1">t(6)A synthase</shortName>
    </alternativeName>
    <alternativeName>
        <fullName evidence="1">t(6)A37 threonylcarbamoyladenosine biosynthesis protein Kae1</fullName>
    </alternativeName>
    <alternativeName>
        <fullName evidence="1">tRNA threonylcarbamoyladenosine biosynthesis protein Kae1</fullName>
    </alternativeName>
</protein>
<keyword id="KW-0012">Acyltransferase</keyword>
<keyword id="KW-0963">Cytoplasm</keyword>
<keyword id="KW-0408">Iron</keyword>
<keyword id="KW-0479">Metal-binding</keyword>
<keyword id="KW-1185">Reference proteome</keyword>
<keyword id="KW-0808">Transferase</keyword>
<keyword id="KW-0819">tRNA processing</keyword>
<accession>O29153</accession>
<organism>
    <name type="scientific">Archaeoglobus fulgidus (strain ATCC 49558 / DSM 4304 / JCM 9628 / NBRC 100126 / VC-16)</name>
    <dbReference type="NCBI Taxonomy" id="224325"/>
    <lineage>
        <taxon>Archaea</taxon>
        <taxon>Methanobacteriati</taxon>
        <taxon>Methanobacteriota</taxon>
        <taxon>Archaeoglobi</taxon>
        <taxon>Archaeoglobales</taxon>
        <taxon>Archaeoglobaceae</taxon>
        <taxon>Archaeoglobus</taxon>
    </lineage>
</organism>
<feature type="chain" id="PRO_0000303631" description="tRNA N6-adenosine threonylcarbamoyltransferase">
    <location>
        <begin position="1"/>
        <end position="323"/>
    </location>
</feature>
<feature type="binding site" evidence="1">
    <location>
        <position position="105"/>
    </location>
    <ligand>
        <name>Fe cation</name>
        <dbReference type="ChEBI" id="CHEBI:24875"/>
    </ligand>
</feature>
<feature type="binding site" evidence="1">
    <location>
        <position position="109"/>
    </location>
    <ligand>
        <name>Fe cation</name>
        <dbReference type="ChEBI" id="CHEBI:24875"/>
    </ligand>
</feature>
<feature type="binding site" evidence="1">
    <location>
        <begin position="126"/>
        <end position="130"/>
    </location>
    <ligand>
        <name>substrate</name>
    </ligand>
</feature>
<feature type="binding site" evidence="1">
    <location>
        <position position="126"/>
    </location>
    <ligand>
        <name>Fe cation</name>
        <dbReference type="ChEBI" id="CHEBI:24875"/>
    </ligand>
</feature>
<feature type="binding site" evidence="1">
    <location>
        <position position="158"/>
    </location>
    <ligand>
        <name>substrate</name>
    </ligand>
</feature>
<feature type="binding site" evidence="1">
    <location>
        <position position="171"/>
    </location>
    <ligand>
        <name>substrate</name>
    </ligand>
</feature>
<feature type="binding site" evidence="1">
    <location>
        <position position="175"/>
    </location>
    <ligand>
        <name>substrate</name>
    </ligand>
</feature>
<feature type="binding site" evidence="1">
    <location>
        <position position="255"/>
    </location>
    <ligand>
        <name>substrate</name>
    </ligand>
</feature>
<feature type="binding site" evidence="1">
    <location>
        <position position="283"/>
    </location>
    <ligand>
        <name>Fe cation</name>
        <dbReference type="ChEBI" id="CHEBI:24875"/>
    </ligand>
</feature>
<reference key="1">
    <citation type="journal article" date="1997" name="Nature">
        <title>The complete genome sequence of the hyperthermophilic, sulphate-reducing archaeon Archaeoglobus fulgidus.</title>
        <authorList>
            <person name="Klenk H.-P."/>
            <person name="Clayton R.A."/>
            <person name="Tomb J.-F."/>
            <person name="White O."/>
            <person name="Nelson K.E."/>
            <person name="Ketchum K.A."/>
            <person name="Dodson R.J."/>
            <person name="Gwinn M.L."/>
            <person name="Hickey E.K."/>
            <person name="Peterson J.D."/>
            <person name="Richardson D.L."/>
            <person name="Kerlavage A.R."/>
            <person name="Graham D.E."/>
            <person name="Kyrpides N.C."/>
            <person name="Fleischmann R.D."/>
            <person name="Quackenbush J."/>
            <person name="Lee N.H."/>
            <person name="Sutton G.G."/>
            <person name="Gill S.R."/>
            <person name="Kirkness E.F."/>
            <person name="Dougherty B.A."/>
            <person name="McKenney K."/>
            <person name="Adams M.D."/>
            <person name="Loftus B.J."/>
            <person name="Peterson S.N."/>
            <person name="Reich C.I."/>
            <person name="McNeil L.K."/>
            <person name="Badger J.H."/>
            <person name="Glodek A."/>
            <person name="Zhou L."/>
            <person name="Overbeek R."/>
            <person name="Gocayne J.D."/>
            <person name="Weidman J.F."/>
            <person name="McDonald L.A."/>
            <person name="Utterback T.R."/>
            <person name="Cotton M.D."/>
            <person name="Spriggs T."/>
            <person name="Artiach P."/>
            <person name="Kaine B.P."/>
            <person name="Sykes S.M."/>
            <person name="Sadow P.W."/>
            <person name="D'Andrea K.P."/>
            <person name="Bowman C."/>
            <person name="Fujii C."/>
            <person name="Garland S.A."/>
            <person name="Mason T.M."/>
            <person name="Olsen G.J."/>
            <person name="Fraser C.M."/>
            <person name="Smith H.O."/>
            <person name="Woese C.R."/>
            <person name="Venter J.C."/>
        </authorList>
    </citation>
    <scope>NUCLEOTIDE SEQUENCE [LARGE SCALE GENOMIC DNA]</scope>
    <source>
        <strain>ATCC 49558 / DSM 4304 / JCM 9628 / NBRC 100126 / VC-16</strain>
    </source>
</reference>
<comment type="function">
    <text evidence="1">Required for the formation of a threonylcarbamoyl group on adenosine at position 37 (t(6)A37) in tRNAs that read codons beginning with adenine. Is a component of the KEOPS complex that is probably involved in the transfer of the threonylcarbamoyl moiety of threonylcarbamoyl-AMP (TC-AMP) to the N6 group of A37. Kae1 likely plays a direct catalytic role in this reaction, but requires other protein(s) of the complex to fulfill this activity.</text>
</comment>
<comment type="catalytic activity">
    <reaction evidence="1">
        <text>L-threonylcarbamoyladenylate + adenosine(37) in tRNA = N(6)-L-threonylcarbamoyladenosine(37) in tRNA + AMP + H(+)</text>
        <dbReference type="Rhea" id="RHEA:37059"/>
        <dbReference type="Rhea" id="RHEA-COMP:10162"/>
        <dbReference type="Rhea" id="RHEA-COMP:10163"/>
        <dbReference type="ChEBI" id="CHEBI:15378"/>
        <dbReference type="ChEBI" id="CHEBI:73682"/>
        <dbReference type="ChEBI" id="CHEBI:74411"/>
        <dbReference type="ChEBI" id="CHEBI:74418"/>
        <dbReference type="ChEBI" id="CHEBI:456215"/>
        <dbReference type="EC" id="2.3.1.234"/>
    </reaction>
</comment>
<comment type="cofactor">
    <cofactor evidence="1">
        <name>Fe(2+)</name>
        <dbReference type="ChEBI" id="CHEBI:29033"/>
    </cofactor>
    <text evidence="1">Binds 1 Fe(2+) ion per subunit.</text>
</comment>
<comment type="subunit">
    <text evidence="1">Monomer. Component of the KEOPS complex that consists of Kae1, Bud32, Cgi121 and Pcc1; the whole complex dimerizes.</text>
</comment>
<comment type="subcellular location">
    <subcellularLocation>
        <location evidence="1">Cytoplasm</location>
    </subcellularLocation>
</comment>
<comment type="similarity">
    <text evidence="1">Belongs to the KAE1 / TsaD family.</text>
</comment>
<dbReference type="EC" id="2.3.1.234" evidence="1"/>
<dbReference type="EMBL" id="AE000782">
    <property type="protein sequence ID" value="AAB90129.1"/>
    <property type="molecule type" value="Genomic_DNA"/>
</dbReference>
<dbReference type="PIR" id="G69388">
    <property type="entry name" value="G69388"/>
</dbReference>
<dbReference type="RefSeq" id="WP_010878608.1">
    <property type="nucleotide sequence ID" value="NC_000917.1"/>
</dbReference>
<dbReference type="SMR" id="O29153"/>
<dbReference type="STRING" id="224325.AF_1112"/>
<dbReference type="PaxDb" id="224325-AF_1112"/>
<dbReference type="EnsemblBacteria" id="AAB90129">
    <property type="protein sequence ID" value="AAB90129"/>
    <property type="gene ID" value="AF_1112"/>
</dbReference>
<dbReference type="KEGG" id="afu:AF_1112"/>
<dbReference type="eggNOG" id="arCOG01183">
    <property type="taxonomic scope" value="Archaea"/>
</dbReference>
<dbReference type="HOGENOM" id="CLU_023208_2_2_2"/>
<dbReference type="OrthoDB" id="6818at2157"/>
<dbReference type="PhylomeDB" id="O29153"/>
<dbReference type="Proteomes" id="UP000002199">
    <property type="component" value="Chromosome"/>
</dbReference>
<dbReference type="GO" id="GO:0005737">
    <property type="term" value="C:cytoplasm"/>
    <property type="evidence" value="ECO:0007669"/>
    <property type="project" value="UniProtKB-SubCell"/>
</dbReference>
<dbReference type="GO" id="GO:0000408">
    <property type="term" value="C:EKC/KEOPS complex"/>
    <property type="evidence" value="ECO:0007669"/>
    <property type="project" value="InterPro"/>
</dbReference>
<dbReference type="GO" id="GO:0005506">
    <property type="term" value="F:iron ion binding"/>
    <property type="evidence" value="ECO:0007669"/>
    <property type="project" value="UniProtKB-UniRule"/>
</dbReference>
<dbReference type="GO" id="GO:0061711">
    <property type="term" value="F:N(6)-L-threonylcarbamoyladenine synthase activity"/>
    <property type="evidence" value="ECO:0007669"/>
    <property type="project" value="UniProtKB-EC"/>
</dbReference>
<dbReference type="GO" id="GO:0002949">
    <property type="term" value="P:tRNA threonylcarbamoyladenosine modification"/>
    <property type="evidence" value="ECO:0007669"/>
    <property type="project" value="UniProtKB-UniRule"/>
</dbReference>
<dbReference type="CDD" id="cd24131">
    <property type="entry name" value="ASKHA_NBD_Kae1_arch_bac"/>
    <property type="match status" value="1"/>
</dbReference>
<dbReference type="FunFam" id="3.30.420.40:FF:000038">
    <property type="entry name" value="Probable tRNA N6-adenosine threonylcarbamoyltransferase"/>
    <property type="match status" value="1"/>
</dbReference>
<dbReference type="Gene3D" id="3.30.420.40">
    <property type="match status" value="2"/>
</dbReference>
<dbReference type="HAMAP" id="MF_01446">
    <property type="entry name" value="Kae1"/>
    <property type="match status" value="1"/>
</dbReference>
<dbReference type="InterPro" id="IPR043129">
    <property type="entry name" value="ATPase_NBD"/>
</dbReference>
<dbReference type="InterPro" id="IPR000905">
    <property type="entry name" value="Gcp-like_dom"/>
</dbReference>
<dbReference type="InterPro" id="IPR017861">
    <property type="entry name" value="KAE1/TsaD"/>
</dbReference>
<dbReference type="InterPro" id="IPR034680">
    <property type="entry name" value="Kae1_archaea_euk"/>
</dbReference>
<dbReference type="NCBIfam" id="TIGR03722">
    <property type="entry name" value="arch_KAE1"/>
    <property type="match status" value="1"/>
</dbReference>
<dbReference type="NCBIfam" id="TIGR00329">
    <property type="entry name" value="gcp_kae1"/>
    <property type="match status" value="1"/>
</dbReference>
<dbReference type="NCBIfam" id="NF007174">
    <property type="entry name" value="PRK09605.1"/>
    <property type="match status" value="1"/>
</dbReference>
<dbReference type="PANTHER" id="PTHR11735">
    <property type="entry name" value="TRNA N6-ADENOSINE THREONYLCARBAMOYLTRANSFERASE"/>
    <property type="match status" value="1"/>
</dbReference>
<dbReference type="PANTHER" id="PTHR11735:SF14">
    <property type="entry name" value="TRNA N6-ADENOSINE THREONYLCARBAMOYLTRANSFERASE"/>
    <property type="match status" value="1"/>
</dbReference>
<dbReference type="Pfam" id="PF00814">
    <property type="entry name" value="TsaD"/>
    <property type="match status" value="1"/>
</dbReference>
<dbReference type="PRINTS" id="PR00789">
    <property type="entry name" value="OSIALOPTASE"/>
</dbReference>
<dbReference type="SUPFAM" id="SSF53067">
    <property type="entry name" value="Actin-like ATPase domain"/>
    <property type="match status" value="1"/>
</dbReference>
<gene>
    <name evidence="1" type="primary">kae1</name>
    <name type="ordered locus">AF_1112</name>
</gene>
<name>KAE1_ARCFU</name>
<evidence type="ECO:0000255" key="1">
    <source>
        <dbReference type="HAMAP-Rule" id="MF_01446"/>
    </source>
</evidence>
<proteinExistence type="inferred from homology"/>